<gene>
    <name type="primary">ULBP1</name>
    <name type="synonym">N2DL1</name>
    <name type="synonym">RAET1I</name>
</gene>
<name>ULBP1_HUMAN</name>
<comment type="function">
    <text evidence="3">Binds and activates the KLRK1/NKG2D receptor, mediating natural killer cell cytotoxicity.</text>
</comment>
<comment type="subunit">
    <text evidence="3 4">Interacts with KLRK1/NKG2D (PubMed:11777960). Does not bind to beta2-microglobulin (PubMed:12782710).</text>
</comment>
<comment type="subunit">
    <text evidence="4">(Microbial infection) In CMV-infected cells, interacts with the viral glycoprotein UL16; this interaction causes ULBP1 retention in the endoplasmic reticulum and cis-Golgi and prevents binding to and activation of KLRK1/NKG2D, providing CMV with an immune evasion mechanism.</text>
</comment>
<comment type="interaction">
    <interactant intactId="EBI-16365037">
        <id>Q9BZM6</id>
    </interactant>
    <interactant intactId="EBI-458344">
        <id>P26718</id>
        <label>KLRK1</label>
    </interactant>
    <organismsDiffer>false</organismsDiffer>
    <experiments>2</experiments>
</comment>
<comment type="subcellular location">
    <subcellularLocation>
        <location evidence="4">Cell membrane</location>
        <topology evidence="4">Lipid-anchor</topology>
        <topology evidence="4">GPI-anchor</topology>
    </subcellularLocation>
    <subcellularLocation>
        <location evidence="4">Endoplasmic reticulum</location>
    </subcellularLocation>
    <text evidence="4">In CMV-infected fibroblasts, detected in the endoplasmic reticulum/cis-Golgi.</text>
</comment>
<comment type="tissue specificity">
    <text>Expressed in T-cells, B-cells, erythroleukemia cell lines and in a wide range of tissues including heart, brain, lung, liver, testis, lymph node, thymus, tonsil and bone marrow. Also found in fetal heart, brain, lung and liver.</text>
</comment>
<comment type="miscellaneous">
    <text evidence="5">UL16-binding proteins (ULBPs) are unusual members of the extended MHC class I superfamily. They do not contain the alpha 3 domain and lack a transmembrane domain.</text>
</comment>
<comment type="similarity">
    <text evidence="5">Belongs to the MHC class I family.</text>
</comment>
<dbReference type="EMBL" id="AF304377">
    <property type="protein sequence ID" value="AAK13081.1"/>
    <property type="molecule type" value="mRNA"/>
</dbReference>
<dbReference type="EMBL" id="AB052907">
    <property type="protein sequence ID" value="BAB61049.1"/>
    <property type="molecule type" value="mRNA"/>
</dbReference>
<dbReference type="EMBL" id="AF346416">
    <property type="protein sequence ID" value="AAL76416.1"/>
    <property type="molecule type" value="mRNA"/>
</dbReference>
<dbReference type="EMBL" id="AK292519">
    <property type="protein sequence ID" value="BAF85208.1"/>
    <property type="molecule type" value="mRNA"/>
</dbReference>
<dbReference type="EMBL" id="AK316582">
    <property type="protein sequence ID" value="BAG38170.1"/>
    <property type="molecule type" value="mRNA"/>
</dbReference>
<dbReference type="EMBL" id="AL355497">
    <property type="status" value="NOT_ANNOTATED_CDS"/>
    <property type="molecule type" value="Genomic_DNA"/>
</dbReference>
<dbReference type="EMBL" id="CH471051">
    <property type="protein sequence ID" value="EAW47776.1"/>
    <property type="molecule type" value="Genomic_DNA"/>
</dbReference>
<dbReference type="EMBL" id="BC035416">
    <property type="protein sequence ID" value="AAH35416.1"/>
    <property type="molecule type" value="mRNA"/>
</dbReference>
<dbReference type="EMBL" id="AF425265">
    <property type="protein sequence ID" value="AAN32759.1"/>
    <property type="molecule type" value="mRNA"/>
</dbReference>
<dbReference type="EMBL" id="AF346595">
    <property type="protein sequence ID" value="AAN40838.1"/>
    <property type="molecule type" value="mRNA"/>
</dbReference>
<dbReference type="CCDS" id="CCDS5223.1"/>
<dbReference type="RefSeq" id="NP_001304018.1">
    <property type="nucleotide sequence ID" value="NM_001317089.1"/>
</dbReference>
<dbReference type="RefSeq" id="NP_079494.1">
    <property type="nucleotide sequence ID" value="NM_025218.4"/>
</dbReference>
<dbReference type="SMR" id="Q9BZM6"/>
<dbReference type="BioGRID" id="123241">
    <property type="interactions" value="18"/>
</dbReference>
<dbReference type="CORUM" id="Q9BZM6"/>
<dbReference type="FunCoup" id="Q9BZM6">
    <property type="interactions" value="271"/>
</dbReference>
<dbReference type="IntAct" id="Q9BZM6">
    <property type="interactions" value="9"/>
</dbReference>
<dbReference type="STRING" id="9606.ENSP00000229708"/>
<dbReference type="GlyCosmos" id="Q9BZM6">
    <property type="glycosylation" value="1 site, No reported glycans"/>
</dbReference>
<dbReference type="GlyGen" id="Q9BZM6">
    <property type="glycosylation" value="1 site"/>
</dbReference>
<dbReference type="BioMuta" id="ULBP1"/>
<dbReference type="jPOST" id="Q9BZM6"/>
<dbReference type="MassIVE" id="Q9BZM6"/>
<dbReference type="PaxDb" id="9606-ENSP00000229708"/>
<dbReference type="PeptideAtlas" id="Q9BZM6"/>
<dbReference type="ProteomicsDB" id="79879"/>
<dbReference type="Pumba" id="Q9BZM6"/>
<dbReference type="Antibodypedia" id="2344">
    <property type="antibodies" value="273 antibodies from 27 providers"/>
</dbReference>
<dbReference type="DNASU" id="80329"/>
<dbReference type="Ensembl" id="ENST00000229708.4">
    <property type="protein sequence ID" value="ENSP00000229708.2"/>
    <property type="gene ID" value="ENSG00000111981.5"/>
</dbReference>
<dbReference type="GeneID" id="80329"/>
<dbReference type="KEGG" id="hsa:80329"/>
<dbReference type="MANE-Select" id="ENST00000229708.4">
    <property type="protein sequence ID" value="ENSP00000229708.2"/>
    <property type="RefSeq nucleotide sequence ID" value="NM_025218.4"/>
    <property type="RefSeq protein sequence ID" value="NP_079494.1"/>
</dbReference>
<dbReference type="UCSC" id="uc003qnp.5">
    <property type="organism name" value="human"/>
</dbReference>
<dbReference type="AGR" id="HGNC:14893"/>
<dbReference type="CTD" id="80329"/>
<dbReference type="DisGeNET" id="80329"/>
<dbReference type="GeneCards" id="ULBP1"/>
<dbReference type="HGNC" id="HGNC:14893">
    <property type="gene designation" value="ULBP1"/>
</dbReference>
<dbReference type="HPA" id="ENSG00000111981">
    <property type="expression patterns" value="Group enriched (brain, lung, testis)"/>
</dbReference>
<dbReference type="MIM" id="605697">
    <property type="type" value="gene"/>
</dbReference>
<dbReference type="neXtProt" id="NX_Q9BZM6"/>
<dbReference type="OpenTargets" id="ENSG00000111981"/>
<dbReference type="PharmGKB" id="PA37915"/>
<dbReference type="VEuPathDB" id="HostDB:ENSG00000111981"/>
<dbReference type="eggNOG" id="ENOG502TM6M">
    <property type="taxonomic scope" value="Eukaryota"/>
</dbReference>
<dbReference type="GeneTree" id="ENSGT01130000278293"/>
<dbReference type="HOGENOM" id="CLU_086235_0_0_1"/>
<dbReference type="InParanoid" id="Q9BZM6"/>
<dbReference type="OMA" id="VDTHCLC"/>
<dbReference type="OrthoDB" id="9836934at2759"/>
<dbReference type="PAN-GO" id="Q9BZM6">
    <property type="GO annotations" value="3 GO annotations based on evolutionary models"/>
</dbReference>
<dbReference type="PhylomeDB" id="Q9BZM6"/>
<dbReference type="TreeFam" id="TF341724"/>
<dbReference type="PathwayCommons" id="Q9BZM6"/>
<dbReference type="Reactome" id="R-HSA-198933">
    <property type="pathway name" value="Immunoregulatory interactions between a Lymphoid and a non-Lymphoid cell"/>
</dbReference>
<dbReference type="SignaLink" id="Q9BZM6"/>
<dbReference type="BioGRID-ORCS" id="80329">
    <property type="hits" value="12 hits in 1155 CRISPR screens"/>
</dbReference>
<dbReference type="GeneWiki" id="ULBP1"/>
<dbReference type="GenomeRNAi" id="80329"/>
<dbReference type="Pharos" id="Q9BZM6">
    <property type="development level" value="Tbio"/>
</dbReference>
<dbReference type="PRO" id="PR:Q9BZM6"/>
<dbReference type="Proteomes" id="UP000005640">
    <property type="component" value="Chromosome 6"/>
</dbReference>
<dbReference type="RNAct" id="Q9BZM6">
    <property type="molecule type" value="protein"/>
</dbReference>
<dbReference type="Bgee" id="ENSG00000111981">
    <property type="expression patterns" value="Expressed in stromal cell of endometrium and 84 other cell types or tissues"/>
</dbReference>
<dbReference type="GO" id="GO:0005829">
    <property type="term" value="C:cytosol"/>
    <property type="evidence" value="ECO:0000314"/>
    <property type="project" value="HPA"/>
</dbReference>
<dbReference type="GO" id="GO:0005783">
    <property type="term" value="C:endoplasmic reticulum"/>
    <property type="evidence" value="ECO:0007669"/>
    <property type="project" value="UniProtKB-SubCell"/>
</dbReference>
<dbReference type="GO" id="GO:0009897">
    <property type="term" value="C:external side of plasma membrane"/>
    <property type="evidence" value="ECO:0000318"/>
    <property type="project" value="GO_Central"/>
</dbReference>
<dbReference type="GO" id="GO:0005615">
    <property type="term" value="C:extracellular space"/>
    <property type="evidence" value="ECO:0000318"/>
    <property type="project" value="GO_Central"/>
</dbReference>
<dbReference type="GO" id="GO:0005886">
    <property type="term" value="C:plasma membrane"/>
    <property type="evidence" value="ECO:0000314"/>
    <property type="project" value="UniProtKB"/>
</dbReference>
<dbReference type="GO" id="GO:0046703">
    <property type="term" value="F:natural killer cell lectin-like receptor binding"/>
    <property type="evidence" value="ECO:0000314"/>
    <property type="project" value="UniProtKB"/>
</dbReference>
<dbReference type="GO" id="GO:0048018">
    <property type="term" value="F:receptor ligand activity"/>
    <property type="evidence" value="ECO:0000314"/>
    <property type="project" value="UniProt"/>
</dbReference>
<dbReference type="GO" id="GO:0002486">
    <property type="term" value="P:antigen processing and presentation of endogenous peptide antigen via MHC class I via ER pathway, TAP-independent"/>
    <property type="evidence" value="ECO:0000318"/>
    <property type="project" value="GO_Central"/>
</dbReference>
<dbReference type="GO" id="GO:0002476">
    <property type="term" value="P:antigen processing and presentation of endogenous peptide antigen via MHC class Ib"/>
    <property type="evidence" value="ECO:0000318"/>
    <property type="project" value="GO_Central"/>
</dbReference>
<dbReference type="GO" id="GO:0006955">
    <property type="term" value="P:immune response"/>
    <property type="evidence" value="ECO:0000318"/>
    <property type="project" value="GO_Central"/>
</dbReference>
<dbReference type="GO" id="GO:0030101">
    <property type="term" value="P:natural killer cell activation"/>
    <property type="evidence" value="ECO:0000314"/>
    <property type="project" value="UniProtKB"/>
</dbReference>
<dbReference type="GO" id="GO:0042267">
    <property type="term" value="P:natural killer cell mediated cytotoxicity"/>
    <property type="evidence" value="ECO:0000314"/>
    <property type="project" value="UniProtKB"/>
</dbReference>
<dbReference type="GO" id="GO:0001916">
    <property type="term" value="P:positive regulation of T cell mediated cytotoxicity"/>
    <property type="evidence" value="ECO:0000318"/>
    <property type="project" value="GO_Central"/>
</dbReference>
<dbReference type="FunFam" id="3.30.500.10:FF:000004">
    <property type="entry name" value="Retinoic acid early-inducible protein 1-beta"/>
    <property type="match status" value="1"/>
</dbReference>
<dbReference type="Gene3D" id="3.30.500.10">
    <property type="entry name" value="MHC class I-like antigen recognition-like"/>
    <property type="match status" value="1"/>
</dbReference>
<dbReference type="InterPro" id="IPR050208">
    <property type="entry name" value="MHC_class-I_related"/>
</dbReference>
<dbReference type="InterPro" id="IPR011161">
    <property type="entry name" value="MHC_I-like_Ag-recog"/>
</dbReference>
<dbReference type="InterPro" id="IPR037055">
    <property type="entry name" value="MHC_I-like_Ag-recog_sf"/>
</dbReference>
<dbReference type="InterPro" id="IPR011162">
    <property type="entry name" value="MHC_I/II-like_Ag-recog"/>
</dbReference>
<dbReference type="PANTHER" id="PTHR16675">
    <property type="entry name" value="MHC CLASS I-RELATED"/>
    <property type="match status" value="1"/>
</dbReference>
<dbReference type="PANTHER" id="PTHR16675:SF268">
    <property type="entry name" value="UL16-BINDING PROTEIN 1"/>
    <property type="match status" value="1"/>
</dbReference>
<dbReference type="Pfam" id="PF00129">
    <property type="entry name" value="MHC_I"/>
    <property type="match status" value="1"/>
</dbReference>
<dbReference type="SUPFAM" id="SSF54452">
    <property type="entry name" value="MHC antigen-recognition domain"/>
    <property type="match status" value="1"/>
</dbReference>
<feature type="signal peptide" evidence="1">
    <location>
        <begin position="1"/>
        <end position="25"/>
    </location>
</feature>
<feature type="chain" id="PRO_0000019015" description="UL16-binding protein 1">
    <location>
        <begin position="26"/>
        <end position="216"/>
    </location>
</feature>
<feature type="propeptide" id="PRO_0000019016" description="Removed in mature form" evidence="2">
    <location>
        <begin position="217"/>
        <end position="244"/>
    </location>
</feature>
<feature type="region of interest" description="MHC class I alpha-1 like">
    <location>
        <begin position="26"/>
        <end position="117"/>
    </location>
</feature>
<feature type="region of interest" description="MHC class I alpha-2 like">
    <location>
        <begin position="118"/>
        <end position="208"/>
    </location>
</feature>
<feature type="lipid moiety-binding region" description="GPI-anchor amidated glycine" evidence="2">
    <location>
        <position position="216"/>
    </location>
</feature>
<feature type="glycosylation site" description="N-linked (GlcNAc...) asparagine" evidence="2">
    <location>
        <position position="82"/>
    </location>
</feature>
<feature type="disulfide bond" evidence="1">
    <location>
        <begin position="50"/>
        <end position="66"/>
    </location>
</feature>
<feature type="disulfide bond" evidence="1">
    <location>
        <begin position="127"/>
        <end position="190"/>
    </location>
</feature>
<feature type="sequence variant" id="VAR_050407" description="In dbSNP:rs6903584.">
    <original>L</original>
    <variation>I</variation>
    <location>
        <position position="101"/>
    </location>
</feature>
<sequence>MAAAASPAFLLCLPLLHLLSGWSRAGWVDTHCLCYDFIITPKSRPEPQWCEVQGLVDERPFLHYDCVNHKAKAFASLGKKVNVTKTWEEQTETLRDVVDFLKGQLLDIQVENLIPIEPLTLQARMSCEHEAHGHGRGSWQFLFNGQKFLLFDSNNRKWTALHPGAKKMTEKWEKNRDVTMFFQKISLGDCKMWLEEFLMYWEQMLDPTKPPSLAPGTTQPKAMATTLSPWSLLIIFLCFILAGR</sequence>
<organism>
    <name type="scientific">Homo sapiens</name>
    <name type="common">Human</name>
    <dbReference type="NCBI Taxonomy" id="9606"/>
    <lineage>
        <taxon>Eukaryota</taxon>
        <taxon>Metazoa</taxon>
        <taxon>Chordata</taxon>
        <taxon>Craniata</taxon>
        <taxon>Vertebrata</taxon>
        <taxon>Euteleostomi</taxon>
        <taxon>Mammalia</taxon>
        <taxon>Eutheria</taxon>
        <taxon>Euarchontoglires</taxon>
        <taxon>Primates</taxon>
        <taxon>Haplorrhini</taxon>
        <taxon>Catarrhini</taxon>
        <taxon>Hominidae</taxon>
        <taxon>Homo</taxon>
    </lineage>
</organism>
<evidence type="ECO:0000250" key="1"/>
<evidence type="ECO:0000255" key="2"/>
<evidence type="ECO:0000269" key="3">
    <source>
    </source>
</evidence>
<evidence type="ECO:0000269" key="4">
    <source>
    </source>
</evidence>
<evidence type="ECO:0000305" key="5"/>
<protein>
    <recommendedName>
        <fullName>UL16-binding protein 1</fullName>
    </recommendedName>
    <alternativeName>
        <fullName>ALCAN-beta</fullName>
    </alternativeName>
    <alternativeName>
        <fullName>NKG2D ligand 1</fullName>
        <shortName>N2DL-1</shortName>
        <shortName>NKG2DL1</shortName>
    </alternativeName>
    <alternativeName>
        <fullName>Retinoic acid early transcript 1I</fullName>
    </alternativeName>
</protein>
<reference key="1">
    <citation type="journal article" date="2001" name="Immunity">
        <title>ULBPs, novel MHC class I-related molecules, bind to CMV glycoprotein UL16 and stimulate NK cytotoxicity through the NKG2D receptor.</title>
        <authorList>
            <person name="Cosman D."/>
            <person name="Mullberg J."/>
            <person name="Sutherland C.L."/>
            <person name="Chin W."/>
            <person name="Armitage R."/>
            <person name="Fanslow W."/>
            <person name="Kubin M."/>
            <person name="Chalupny N.J."/>
        </authorList>
    </citation>
    <scope>NUCLEOTIDE SEQUENCE [MRNA]</scope>
    <scope>GPI-ANCHOR</scope>
    <source>
        <tissue>B-cell lymphoma</tissue>
    </source>
</reference>
<reference key="2">
    <citation type="submission" date="2000-12" db="EMBL/GenBank/DDBJ databases">
        <authorList>
            <person name="Onda H."/>
            <person name="Shintani Y."/>
            <person name="Ohkubo S."/>
            <person name="Ogi K."/>
        </authorList>
    </citation>
    <scope>NUCLEOTIDE SEQUENCE [MRNA]</scope>
</reference>
<reference key="3">
    <citation type="journal article" date="2002" name="Genomics">
        <title>A cluster of ten novel MHC class I related genes on human chromosome 6q24.2-q25.3.</title>
        <authorList>
            <person name="Radosavljevic M."/>
            <person name="Cuillerier B."/>
            <person name="Wilson M.J."/>
            <person name="Clement O."/>
            <person name="Wicker S."/>
            <person name="Gilfillan S."/>
            <person name="Beck S."/>
            <person name="Trowsdale J."/>
            <person name="Bahram S."/>
        </authorList>
    </citation>
    <scope>NUCLEOTIDE SEQUENCE [MRNA]</scope>
</reference>
<reference key="4">
    <citation type="journal article" date="2004" name="Nat. Genet.">
        <title>Complete sequencing and characterization of 21,243 full-length human cDNAs.</title>
        <authorList>
            <person name="Ota T."/>
            <person name="Suzuki Y."/>
            <person name="Nishikawa T."/>
            <person name="Otsuki T."/>
            <person name="Sugiyama T."/>
            <person name="Irie R."/>
            <person name="Wakamatsu A."/>
            <person name="Hayashi K."/>
            <person name="Sato H."/>
            <person name="Nagai K."/>
            <person name="Kimura K."/>
            <person name="Makita H."/>
            <person name="Sekine M."/>
            <person name="Obayashi M."/>
            <person name="Nishi T."/>
            <person name="Shibahara T."/>
            <person name="Tanaka T."/>
            <person name="Ishii S."/>
            <person name="Yamamoto J."/>
            <person name="Saito K."/>
            <person name="Kawai Y."/>
            <person name="Isono Y."/>
            <person name="Nakamura Y."/>
            <person name="Nagahari K."/>
            <person name="Murakami K."/>
            <person name="Yasuda T."/>
            <person name="Iwayanagi T."/>
            <person name="Wagatsuma M."/>
            <person name="Shiratori A."/>
            <person name="Sudo H."/>
            <person name="Hosoiri T."/>
            <person name="Kaku Y."/>
            <person name="Kodaira H."/>
            <person name="Kondo H."/>
            <person name="Sugawara M."/>
            <person name="Takahashi M."/>
            <person name="Kanda K."/>
            <person name="Yokoi T."/>
            <person name="Furuya T."/>
            <person name="Kikkawa E."/>
            <person name="Omura Y."/>
            <person name="Abe K."/>
            <person name="Kamihara K."/>
            <person name="Katsuta N."/>
            <person name="Sato K."/>
            <person name="Tanikawa M."/>
            <person name="Yamazaki M."/>
            <person name="Ninomiya K."/>
            <person name="Ishibashi T."/>
            <person name="Yamashita H."/>
            <person name="Murakawa K."/>
            <person name="Fujimori K."/>
            <person name="Tanai H."/>
            <person name="Kimata M."/>
            <person name="Watanabe M."/>
            <person name="Hiraoka S."/>
            <person name="Chiba Y."/>
            <person name="Ishida S."/>
            <person name="Ono Y."/>
            <person name="Takiguchi S."/>
            <person name="Watanabe S."/>
            <person name="Yosida M."/>
            <person name="Hotuta T."/>
            <person name="Kusano J."/>
            <person name="Kanehori K."/>
            <person name="Takahashi-Fujii A."/>
            <person name="Hara H."/>
            <person name="Tanase T.-O."/>
            <person name="Nomura Y."/>
            <person name="Togiya S."/>
            <person name="Komai F."/>
            <person name="Hara R."/>
            <person name="Takeuchi K."/>
            <person name="Arita M."/>
            <person name="Imose N."/>
            <person name="Musashino K."/>
            <person name="Yuuki H."/>
            <person name="Oshima A."/>
            <person name="Sasaki N."/>
            <person name="Aotsuka S."/>
            <person name="Yoshikawa Y."/>
            <person name="Matsunawa H."/>
            <person name="Ichihara T."/>
            <person name="Shiohata N."/>
            <person name="Sano S."/>
            <person name="Moriya S."/>
            <person name="Momiyama H."/>
            <person name="Satoh N."/>
            <person name="Takami S."/>
            <person name="Terashima Y."/>
            <person name="Suzuki O."/>
            <person name="Nakagawa S."/>
            <person name="Senoh A."/>
            <person name="Mizoguchi H."/>
            <person name="Goto Y."/>
            <person name="Shimizu F."/>
            <person name="Wakebe H."/>
            <person name="Hishigaki H."/>
            <person name="Watanabe T."/>
            <person name="Sugiyama A."/>
            <person name="Takemoto M."/>
            <person name="Kawakami B."/>
            <person name="Yamazaki M."/>
            <person name="Watanabe K."/>
            <person name="Kumagai A."/>
            <person name="Itakura S."/>
            <person name="Fukuzumi Y."/>
            <person name="Fujimori Y."/>
            <person name="Komiyama M."/>
            <person name="Tashiro H."/>
            <person name="Tanigami A."/>
            <person name="Fujiwara T."/>
            <person name="Ono T."/>
            <person name="Yamada K."/>
            <person name="Fujii Y."/>
            <person name="Ozaki K."/>
            <person name="Hirao M."/>
            <person name="Ohmori Y."/>
            <person name="Kawabata A."/>
            <person name="Hikiji T."/>
            <person name="Kobatake N."/>
            <person name="Inagaki H."/>
            <person name="Ikema Y."/>
            <person name="Okamoto S."/>
            <person name="Okitani R."/>
            <person name="Kawakami T."/>
            <person name="Noguchi S."/>
            <person name="Itoh T."/>
            <person name="Shigeta K."/>
            <person name="Senba T."/>
            <person name="Matsumura K."/>
            <person name="Nakajima Y."/>
            <person name="Mizuno T."/>
            <person name="Morinaga M."/>
            <person name="Sasaki M."/>
            <person name="Togashi T."/>
            <person name="Oyama M."/>
            <person name="Hata H."/>
            <person name="Watanabe M."/>
            <person name="Komatsu T."/>
            <person name="Mizushima-Sugano J."/>
            <person name="Satoh T."/>
            <person name="Shirai Y."/>
            <person name="Takahashi Y."/>
            <person name="Nakagawa K."/>
            <person name="Okumura K."/>
            <person name="Nagase T."/>
            <person name="Nomura N."/>
            <person name="Kikuchi H."/>
            <person name="Masuho Y."/>
            <person name="Yamashita R."/>
            <person name="Nakai K."/>
            <person name="Yada T."/>
            <person name="Nakamura Y."/>
            <person name="Ohara O."/>
            <person name="Isogai T."/>
            <person name="Sugano S."/>
        </authorList>
    </citation>
    <scope>NUCLEOTIDE SEQUENCE [LARGE SCALE MRNA]</scope>
    <source>
        <tissue>Cerebellum</tissue>
        <tissue>Testis</tissue>
    </source>
</reference>
<reference key="5">
    <citation type="journal article" date="2003" name="Nature">
        <title>The DNA sequence and analysis of human chromosome 6.</title>
        <authorList>
            <person name="Mungall A.J."/>
            <person name="Palmer S.A."/>
            <person name="Sims S.K."/>
            <person name="Edwards C.A."/>
            <person name="Ashurst J.L."/>
            <person name="Wilming L."/>
            <person name="Jones M.C."/>
            <person name="Horton R."/>
            <person name="Hunt S.E."/>
            <person name="Scott C.E."/>
            <person name="Gilbert J.G.R."/>
            <person name="Clamp M.E."/>
            <person name="Bethel G."/>
            <person name="Milne S."/>
            <person name="Ainscough R."/>
            <person name="Almeida J.P."/>
            <person name="Ambrose K.D."/>
            <person name="Andrews T.D."/>
            <person name="Ashwell R.I.S."/>
            <person name="Babbage A.K."/>
            <person name="Bagguley C.L."/>
            <person name="Bailey J."/>
            <person name="Banerjee R."/>
            <person name="Barker D.J."/>
            <person name="Barlow K.F."/>
            <person name="Bates K."/>
            <person name="Beare D.M."/>
            <person name="Beasley H."/>
            <person name="Beasley O."/>
            <person name="Bird C.P."/>
            <person name="Blakey S.E."/>
            <person name="Bray-Allen S."/>
            <person name="Brook J."/>
            <person name="Brown A.J."/>
            <person name="Brown J.Y."/>
            <person name="Burford D.C."/>
            <person name="Burrill W."/>
            <person name="Burton J."/>
            <person name="Carder C."/>
            <person name="Carter N.P."/>
            <person name="Chapman J.C."/>
            <person name="Clark S.Y."/>
            <person name="Clark G."/>
            <person name="Clee C.M."/>
            <person name="Clegg S."/>
            <person name="Cobley V."/>
            <person name="Collier R.E."/>
            <person name="Collins J.E."/>
            <person name="Colman L.K."/>
            <person name="Corby N.R."/>
            <person name="Coville G.J."/>
            <person name="Culley K.M."/>
            <person name="Dhami P."/>
            <person name="Davies J."/>
            <person name="Dunn M."/>
            <person name="Earthrowl M.E."/>
            <person name="Ellington A.E."/>
            <person name="Evans K.A."/>
            <person name="Faulkner L."/>
            <person name="Francis M.D."/>
            <person name="Frankish A."/>
            <person name="Frankland J."/>
            <person name="French L."/>
            <person name="Garner P."/>
            <person name="Garnett J."/>
            <person name="Ghori M.J."/>
            <person name="Gilby L.M."/>
            <person name="Gillson C.J."/>
            <person name="Glithero R.J."/>
            <person name="Grafham D.V."/>
            <person name="Grant M."/>
            <person name="Gribble S."/>
            <person name="Griffiths C."/>
            <person name="Griffiths M.N.D."/>
            <person name="Hall R."/>
            <person name="Halls K.S."/>
            <person name="Hammond S."/>
            <person name="Harley J.L."/>
            <person name="Hart E.A."/>
            <person name="Heath P.D."/>
            <person name="Heathcott R."/>
            <person name="Holmes S.J."/>
            <person name="Howden P.J."/>
            <person name="Howe K.L."/>
            <person name="Howell G.R."/>
            <person name="Huckle E."/>
            <person name="Humphray S.J."/>
            <person name="Humphries M.D."/>
            <person name="Hunt A.R."/>
            <person name="Johnson C.M."/>
            <person name="Joy A.A."/>
            <person name="Kay M."/>
            <person name="Keenan S.J."/>
            <person name="Kimberley A.M."/>
            <person name="King A."/>
            <person name="Laird G.K."/>
            <person name="Langford C."/>
            <person name="Lawlor S."/>
            <person name="Leongamornlert D.A."/>
            <person name="Leversha M."/>
            <person name="Lloyd C.R."/>
            <person name="Lloyd D.M."/>
            <person name="Loveland J.E."/>
            <person name="Lovell J."/>
            <person name="Martin S."/>
            <person name="Mashreghi-Mohammadi M."/>
            <person name="Maslen G.L."/>
            <person name="Matthews L."/>
            <person name="McCann O.T."/>
            <person name="McLaren S.J."/>
            <person name="McLay K."/>
            <person name="McMurray A."/>
            <person name="Moore M.J.F."/>
            <person name="Mullikin J.C."/>
            <person name="Niblett D."/>
            <person name="Nickerson T."/>
            <person name="Novik K.L."/>
            <person name="Oliver K."/>
            <person name="Overton-Larty E.K."/>
            <person name="Parker A."/>
            <person name="Patel R."/>
            <person name="Pearce A.V."/>
            <person name="Peck A.I."/>
            <person name="Phillimore B.J.C.T."/>
            <person name="Phillips S."/>
            <person name="Plumb R.W."/>
            <person name="Porter K.M."/>
            <person name="Ramsey Y."/>
            <person name="Ranby S.A."/>
            <person name="Rice C.M."/>
            <person name="Ross M.T."/>
            <person name="Searle S.M."/>
            <person name="Sehra H.K."/>
            <person name="Sheridan E."/>
            <person name="Skuce C.D."/>
            <person name="Smith S."/>
            <person name="Smith M."/>
            <person name="Spraggon L."/>
            <person name="Squares S.L."/>
            <person name="Steward C.A."/>
            <person name="Sycamore N."/>
            <person name="Tamlyn-Hall G."/>
            <person name="Tester J."/>
            <person name="Theaker A.J."/>
            <person name="Thomas D.W."/>
            <person name="Thorpe A."/>
            <person name="Tracey A."/>
            <person name="Tromans A."/>
            <person name="Tubby B."/>
            <person name="Wall M."/>
            <person name="Wallis J.M."/>
            <person name="West A.P."/>
            <person name="White S.S."/>
            <person name="Whitehead S.L."/>
            <person name="Whittaker H."/>
            <person name="Wild A."/>
            <person name="Willey D.J."/>
            <person name="Wilmer T.E."/>
            <person name="Wood J.M."/>
            <person name="Wray P.W."/>
            <person name="Wyatt J.C."/>
            <person name="Young L."/>
            <person name="Younger R.M."/>
            <person name="Bentley D.R."/>
            <person name="Coulson A."/>
            <person name="Durbin R.M."/>
            <person name="Hubbard T."/>
            <person name="Sulston J.E."/>
            <person name="Dunham I."/>
            <person name="Rogers J."/>
            <person name="Beck S."/>
        </authorList>
    </citation>
    <scope>NUCLEOTIDE SEQUENCE [LARGE SCALE GENOMIC DNA]</scope>
</reference>
<reference key="6">
    <citation type="submission" date="2005-09" db="EMBL/GenBank/DDBJ databases">
        <authorList>
            <person name="Mural R.J."/>
            <person name="Istrail S."/>
            <person name="Sutton G."/>
            <person name="Florea L."/>
            <person name="Halpern A.L."/>
            <person name="Mobarry C.M."/>
            <person name="Lippert R."/>
            <person name="Walenz B."/>
            <person name="Shatkay H."/>
            <person name="Dew I."/>
            <person name="Miller J.R."/>
            <person name="Flanigan M.J."/>
            <person name="Edwards N.J."/>
            <person name="Bolanos R."/>
            <person name="Fasulo D."/>
            <person name="Halldorsson B.V."/>
            <person name="Hannenhalli S."/>
            <person name="Turner R."/>
            <person name="Yooseph S."/>
            <person name="Lu F."/>
            <person name="Nusskern D.R."/>
            <person name="Shue B.C."/>
            <person name="Zheng X.H."/>
            <person name="Zhong F."/>
            <person name="Delcher A.L."/>
            <person name="Huson D.H."/>
            <person name="Kravitz S.A."/>
            <person name="Mouchard L."/>
            <person name="Reinert K."/>
            <person name="Remington K.A."/>
            <person name="Clark A.G."/>
            <person name="Waterman M.S."/>
            <person name="Eichler E.E."/>
            <person name="Adams M.D."/>
            <person name="Hunkapiller M.W."/>
            <person name="Myers E.W."/>
            <person name="Venter J.C."/>
        </authorList>
    </citation>
    <scope>NUCLEOTIDE SEQUENCE [LARGE SCALE GENOMIC DNA]</scope>
</reference>
<reference key="7">
    <citation type="journal article" date="2004" name="Genome Res.">
        <title>The status, quality, and expansion of the NIH full-length cDNA project: the Mammalian Gene Collection (MGC).</title>
        <authorList>
            <consortium name="The MGC Project Team"/>
        </authorList>
    </citation>
    <scope>NUCLEOTIDE SEQUENCE [LARGE SCALE MRNA]</scope>
    <source>
        <tissue>Testis</tissue>
    </source>
</reference>
<reference key="8">
    <citation type="submission" date="2001-09" db="EMBL/GenBank/DDBJ databases">
        <title>The ULBP proteins are highly divergent among mammals.</title>
        <authorList>
            <person name="Larson J.H."/>
            <person name="Rebeiz M."/>
            <person name="Stiening C.M."/>
            <person name="Windish R."/>
            <person name="Beever J.E."/>
            <person name="Lewin H.A."/>
        </authorList>
    </citation>
    <scope>NUCLEOTIDE SEQUENCE [MRNA] OF 6-244</scope>
</reference>
<reference key="9">
    <citation type="journal article" date="2001" name="Immunogenetics">
        <title>Interactions of human NKG2D with its ligands MICA, MICB, and homologs of the mouse RAE-1 protein family.</title>
        <authorList>
            <person name="Steinle A."/>
            <person name="Li P."/>
            <person name="Morris D.L."/>
            <person name="Groh V."/>
            <person name="Lanier L.L."/>
            <person name="Strong R.K."/>
            <person name="Spies T."/>
        </authorList>
    </citation>
    <scope>NUCLEOTIDE SEQUENCE [MRNA] OF 11-244</scope>
</reference>
<reference key="10">
    <citation type="journal article" date="2003" name="J. Exp. Med.">
        <title>Human cytomegalovirus glycoprotein UL16 causes intracellular sequestration of NKG2D ligands, protecting against natural killer cell cytotoxicity.</title>
        <authorList>
            <person name="Dunn C."/>
            <person name="Chalupny N.J."/>
            <person name="Sutherland C.L."/>
            <person name="Dosch S."/>
            <person name="Sivakumar P.V."/>
            <person name="Johnson D.C."/>
            <person name="Cosman D."/>
        </authorList>
    </citation>
    <scope>INTERACTION WITH CMV UL16</scope>
    <scope>SUBCELLULAR LOCATION</scope>
</reference>
<reference key="11">
    <citation type="journal article" date="2002" name="J. Immunol.">
        <title>UL16-binding proteins, novel MHC class I-related proteins, bind to NKG2D and activate multiple signaling pathways in primary NK cells.</title>
        <authorList>
            <person name="Sutherland C.L."/>
            <person name="Chalupny N.J."/>
            <person name="Schooley K."/>
            <person name="VandenBos T."/>
            <person name="Kubin M."/>
            <person name="Cosman D."/>
        </authorList>
    </citation>
    <scope>FUNCTION</scope>
    <scope>INTERACTION WITH KLRK1</scope>
</reference>
<reference key="12">
    <citation type="journal article" date="2003" name="Tissue Antigens">
        <title>NKG2D ligands: unconventional MHC class I-like molecules exploited by viruses and cancer.</title>
        <authorList>
            <person name="Cerwenka A."/>
            <person name="Lanier L.L."/>
        </authorList>
    </citation>
    <scope>REVIEW</scope>
</reference>
<keyword id="KW-1003">Cell membrane</keyword>
<keyword id="KW-1015">Disulfide bond</keyword>
<keyword id="KW-0256">Endoplasmic reticulum</keyword>
<keyword id="KW-0325">Glycoprotein</keyword>
<keyword id="KW-0336">GPI-anchor</keyword>
<keyword id="KW-0945">Host-virus interaction</keyword>
<keyword id="KW-0391">Immunity</keyword>
<keyword id="KW-0449">Lipoprotein</keyword>
<keyword id="KW-0472">Membrane</keyword>
<keyword id="KW-1267">Proteomics identification</keyword>
<keyword id="KW-1185">Reference proteome</keyword>
<keyword id="KW-0732">Signal</keyword>
<accession>Q9BZM6</accession>
<accession>Q5VY81</accession>
<accession>Q8IZW3</accession>
<accession>Q8IZX6</accession>
<proteinExistence type="evidence at protein level"/>